<organism>
    <name type="scientific">Flavobacterium psychrophilum (strain ATCC 49511 / DSM 21280 / CIP 103535 / JIP02/86)</name>
    <dbReference type="NCBI Taxonomy" id="402612"/>
    <lineage>
        <taxon>Bacteria</taxon>
        <taxon>Pseudomonadati</taxon>
        <taxon>Bacteroidota</taxon>
        <taxon>Flavobacteriia</taxon>
        <taxon>Flavobacteriales</taxon>
        <taxon>Flavobacteriaceae</taxon>
        <taxon>Flavobacterium</taxon>
    </lineage>
</organism>
<sequence>MNNILVEIGIENYIYLCVVLFCIGIFGVLYRRNAIIMFMSIEIMLNAVNLLFVAFSTFHQDAQGQVFVFFSMAVAAAEVAVGLAILVSIYRNLSSIDIDNLKNLKG</sequence>
<name>NUOK_FLAPJ</name>
<feature type="chain" id="PRO_0000390062" description="NADH-quinone oxidoreductase subunit K">
    <location>
        <begin position="1"/>
        <end position="106"/>
    </location>
</feature>
<feature type="transmembrane region" description="Helical" evidence="1">
    <location>
        <begin position="8"/>
        <end position="28"/>
    </location>
</feature>
<feature type="transmembrane region" description="Helical" evidence="1">
    <location>
        <begin position="35"/>
        <end position="55"/>
    </location>
</feature>
<feature type="transmembrane region" description="Helical" evidence="1">
    <location>
        <begin position="66"/>
        <end position="86"/>
    </location>
</feature>
<comment type="function">
    <text evidence="1">NDH-1 shuttles electrons from NADH, via FMN and iron-sulfur (Fe-S) centers, to quinones in the respiratory chain. The immediate electron acceptor for the enzyme in this species is believed to be a menaquinone. Couples the redox reaction to proton translocation (for every two electrons transferred, four hydrogen ions are translocated across the cytoplasmic membrane), and thus conserves the redox energy in a proton gradient.</text>
</comment>
<comment type="catalytic activity">
    <reaction evidence="1">
        <text>a quinone + NADH + 5 H(+)(in) = a quinol + NAD(+) + 4 H(+)(out)</text>
        <dbReference type="Rhea" id="RHEA:57888"/>
        <dbReference type="ChEBI" id="CHEBI:15378"/>
        <dbReference type="ChEBI" id="CHEBI:24646"/>
        <dbReference type="ChEBI" id="CHEBI:57540"/>
        <dbReference type="ChEBI" id="CHEBI:57945"/>
        <dbReference type="ChEBI" id="CHEBI:132124"/>
    </reaction>
</comment>
<comment type="subunit">
    <text evidence="1">NDH-1 is composed of 14 different subunits. Subunits NuoA, H, J, K, L, M, N constitute the membrane sector of the complex.</text>
</comment>
<comment type="subcellular location">
    <subcellularLocation>
        <location evidence="1">Cell inner membrane</location>
        <topology evidence="1">Multi-pass membrane protein</topology>
    </subcellularLocation>
</comment>
<comment type="similarity">
    <text evidence="1">Belongs to the complex I subunit 4L family.</text>
</comment>
<protein>
    <recommendedName>
        <fullName evidence="1">NADH-quinone oxidoreductase subunit K</fullName>
        <ecNumber evidence="1">7.1.1.-</ecNumber>
    </recommendedName>
    <alternativeName>
        <fullName evidence="1">NADH dehydrogenase I subunit K</fullName>
    </alternativeName>
    <alternativeName>
        <fullName evidence="1">NDH-1 subunit K</fullName>
    </alternativeName>
</protein>
<proteinExistence type="inferred from homology"/>
<keyword id="KW-0997">Cell inner membrane</keyword>
<keyword id="KW-1003">Cell membrane</keyword>
<keyword id="KW-0472">Membrane</keyword>
<keyword id="KW-0520">NAD</keyword>
<keyword id="KW-0874">Quinone</keyword>
<keyword id="KW-1185">Reference proteome</keyword>
<keyword id="KW-1278">Translocase</keyword>
<keyword id="KW-0812">Transmembrane</keyword>
<keyword id="KW-1133">Transmembrane helix</keyword>
<keyword id="KW-0813">Transport</keyword>
<evidence type="ECO:0000255" key="1">
    <source>
        <dbReference type="HAMAP-Rule" id="MF_01456"/>
    </source>
</evidence>
<gene>
    <name evidence="1" type="primary">nuoK</name>
    <name type="ordered locus">FP2221</name>
</gene>
<reference key="1">
    <citation type="journal article" date="2007" name="Nat. Biotechnol.">
        <title>Complete genome sequence of the fish pathogen Flavobacterium psychrophilum.</title>
        <authorList>
            <person name="Duchaud E."/>
            <person name="Boussaha M."/>
            <person name="Loux V."/>
            <person name="Bernardet J.-F."/>
            <person name="Michel C."/>
            <person name="Kerouault B."/>
            <person name="Mondot S."/>
            <person name="Nicolas P."/>
            <person name="Bossy R."/>
            <person name="Caron C."/>
            <person name="Bessieres P."/>
            <person name="Gibrat J.-F."/>
            <person name="Claverol S."/>
            <person name="Dumetz F."/>
            <person name="Le Henaff M."/>
            <person name="Benmansour A."/>
        </authorList>
    </citation>
    <scope>NUCLEOTIDE SEQUENCE [LARGE SCALE GENOMIC DNA]</scope>
    <source>
        <strain>ATCC 49511 / DSM 21280 / CIP 103535 / JIP02/86</strain>
    </source>
</reference>
<accession>A6H1Q3</accession>
<dbReference type="EC" id="7.1.1.-" evidence="1"/>
<dbReference type="EMBL" id="AM398681">
    <property type="protein sequence ID" value="CAL44277.1"/>
    <property type="molecule type" value="Genomic_DNA"/>
</dbReference>
<dbReference type="RefSeq" id="WP_011964311.1">
    <property type="nucleotide sequence ID" value="NC_009613.3"/>
</dbReference>
<dbReference type="RefSeq" id="YP_001297078.1">
    <property type="nucleotide sequence ID" value="NC_009613.3"/>
</dbReference>
<dbReference type="SMR" id="A6H1Q3"/>
<dbReference type="STRING" id="402612.FP2221"/>
<dbReference type="EnsemblBacteria" id="CAL44277">
    <property type="protein sequence ID" value="CAL44277"/>
    <property type="gene ID" value="FP2221"/>
</dbReference>
<dbReference type="GeneID" id="66553325"/>
<dbReference type="KEGG" id="fps:FP2221"/>
<dbReference type="PATRIC" id="fig|402612.5.peg.2271"/>
<dbReference type="eggNOG" id="COG0713">
    <property type="taxonomic scope" value="Bacteria"/>
</dbReference>
<dbReference type="HOGENOM" id="CLU_144724_0_0_10"/>
<dbReference type="OrthoDB" id="9810120at2"/>
<dbReference type="Proteomes" id="UP000006394">
    <property type="component" value="Chromosome"/>
</dbReference>
<dbReference type="GO" id="GO:0030964">
    <property type="term" value="C:NADH dehydrogenase complex"/>
    <property type="evidence" value="ECO:0007669"/>
    <property type="project" value="TreeGrafter"/>
</dbReference>
<dbReference type="GO" id="GO:0005886">
    <property type="term" value="C:plasma membrane"/>
    <property type="evidence" value="ECO:0007669"/>
    <property type="project" value="UniProtKB-SubCell"/>
</dbReference>
<dbReference type="GO" id="GO:0050136">
    <property type="term" value="F:NADH:ubiquinone reductase (non-electrogenic) activity"/>
    <property type="evidence" value="ECO:0007669"/>
    <property type="project" value="UniProtKB-UniRule"/>
</dbReference>
<dbReference type="GO" id="GO:0048038">
    <property type="term" value="F:quinone binding"/>
    <property type="evidence" value="ECO:0007669"/>
    <property type="project" value="UniProtKB-KW"/>
</dbReference>
<dbReference type="GO" id="GO:0042773">
    <property type="term" value="P:ATP synthesis coupled electron transport"/>
    <property type="evidence" value="ECO:0007669"/>
    <property type="project" value="InterPro"/>
</dbReference>
<dbReference type="FunFam" id="1.10.287.3510:FF:000001">
    <property type="entry name" value="NADH-quinone oxidoreductase subunit K"/>
    <property type="match status" value="1"/>
</dbReference>
<dbReference type="Gene3D" id="1.10.287.3510">
    <property type="match status" value="1"/>
</dbReference>
<dbReference type="HAMAP" id="MF_01456">
    <property type="entry name" value="NDH1_NuoK"/>
    <property type="match status" value="1"/>
</dbReference>
<dbReference type="InterPro" id="IPR001133">
    <property type="entry name" value="NADH_UbQ_OxRdtase_chain4L/K"/>
</dbReference>
<dbReference type="InterPro" id="IPR039428">
    <property type="entry name" value="NUOK/Mnh_C1-like"/>
</dbReference>
<dbReference type="NCBIfam" id="NF004320">
    <property type="entry name" value="PRK05715.1-2"/>
    <property type="match status" value="1"/>
</dbReference>
<dbReference type="NCBIfam" id="NF004321">
    <property type="entry name" value="PRK05715.1-3"/>
    <property type="match status" value="1"/>
</dbReference>
<dbReference type="NCBIfam" id="NF004323">
    <property type="entry name" value="PRK05715.1-5"/>
    <property type="match status" value="1"/>
</dbReference>
<dbReference type="PANTHER" id="PTHR11434:SF16">
    <property type="entry name" value="NADH-UBIQUINONE OXIDOREDUCTASE CHAIN 4L"/>
    <property type="match status" value="1"/>
</dbReference>
<dbReference type="PANTHER" id="PTHR11434">
    <property type="entry name" value="NADH-UBIQUINONE OXIDOREDUCTASE SUBUNIT ND4L"/>
    <property type="match status" value="1"/>
</dbReference>
<dbReference type="Pfam" id="PF00420">
    <property type="entry name" value="Oxidored_q2"/>
    <property type="match status" value="1"/>
</dbReference>